<proteinExistence type="inferred from homology"/>
<evidence type="ECO:0000255" key="1">
    <source>
        <dbReference type="HAMAP-Rule" id="MF_00406"/>
    </source>
</evidence>
<protein>
    <recommendedName>
        <fullName evidence="1">3-hydroxyacyl-[acyl-carrier-protein] dehydratase FabZ</fullName>
        <ecNumber evidence="1">4.2.1.59</ecNumber>
    </recommendedName>
    <alternativeName>
        <fullName evidence="1">(3R)-hydroxymyristoyl-[acyl-carrier-protein] dehydratase</fullName>
        <shortName evidence="1">(3R)-hydroxymyristoyl-ACP dehydrase</shortName>
    </alternativeName>
    <alternativeName>
        <fullName evidence="1">Beta-hydroxyacyl-ACP dehydratase</fullName>
    </alternativeName>
</protein>
<comment type="function">
    <text evidence="1">Involved in unsaturated fatty acids biosynthesis. Catalyzes the dehydration of short chain beta-hydroxyacyl-ACPs and long chain saturated and unsaturated beta-hydroxyacyl-ACPs.</text>
</comment>
<comment type="catalytic activity">
    <reaction evidence="1">
        <text>a (3R)-hydroxyacyl-[ACP] = a (2E)-enoyl-[ACP] + H2O</text>
        <dbReference type="Rhea" id="RHEA:13097"/>
        <dbReference type="Rhea" id="RHEA-COMP:9925"/>
        <dbReference type="Rhea" id="RHEA-COMP:9945"/>
        <dbReference type="ChEBI" id="CHEBI:15377"/>
        <dbReference type="ChEBI" id="CHEBI:78784"/>
        <dbReference type="ChEBI" id="CHEBI:78827"/>
        <dbReference type="EC" id="4.2.1.59"/>
    </reaction>
</comment>
<comment type="subcellular location">
    <subcellularLocation>
        <location evidence="1">Cytoplasm</location>
    </subcellularLocation>
</comment>
<comment type="similarity">
    <text evidence="1">Belongs to the thioester dehydratase family. FabZ subfamily.</text>
</comment>
<sequence>MSEAARETGTELGTADIQTLLELLPHRYPFLMVDRIVEIDRDESCVGIKNVTANEPQFMGHFPDMPVFPGVLLIEGMAQTAGAICCRHIRADGRNTKQVFFMTIDKCKFRKPVTPGDQVRFHMTKLNQRRTMWWFRGEARVDGTLVAEAEISAMLVTE</sequence>
<dbReference type="EC" id="4.2.1.59" evidence="1"/>
<dbReference type="EMBL" id="CP001001">
    <property type="protein sequence ID" value="ACB25414.1"/>
    <property type="molecule type" value="Genomic_DNA"/>
</dbReference>
<dbReference type="RefSeq" id="WP_012320377.1">
    <property type="nucleotide sequence ID" value="NC_010505.1"/>
</dbReference>
<dbReference type="SMR" id="B1LTP5"/>
<dbReference type="STRING" id="426355.Mrad2831_3437"/>
<dbReference type="GeneID" id="6139485"/>
<dbReference type="KEGG" id="mrd:Mrad2831_3437"/>
<dbReference type="eggNOG" id="COG0764">
    <property type="taxonomic scope" value="Bacteria"/>
</dbReference>
<dbReference type="HOGENOM" id="CLU_078912_1_2_5"/>
<dbReference type="OrthoDB" id="9772788at2"/>
<dbReference type="Proteomes" id="UP000006589">
    <property type="component" value="Chromosome"/>
</dbReference>
<dbReference type="GO" id="GO:0005737">
    <property type="term" value="C:cytoplasm"/>
    <property type="evidence" value="ECO:0007669"/>
    <property type="project" value="UniProtKB-SubCell"/>
</dbReference>
<dbReference type="GO" id="GO:0016020">
    <property type="term" value="C:membrane"/>
    <property type="evidence" value="ECO:0007669"/>
    <property type="project" value="GOC"/>
</dbReference>
<dbReference type="GO" id="GO:0019171">
    <property type="term" value="F:(3R)-hydroxyacyl-[acyl-carrier-protein] dehydratase activity"/>
    <property type="evidence" value="ECO:0007669"/>
    <property type="project" value="UniProtKB-EC"/>
</dbReference>
<dbReference type="GO" id="GO:0006633">
    <property type="term" value="P:fatty acid biosynthetic process"/>
    <property type="evidence" value="ECO:0007669"/>
    <property type="project" value="UniProtKB-UniRule"/>
</dbReference>
<dbReference type="GO" id="GO:0009245">
    <property type="term" value="P:lipid A biosynthetic process"/>
    <property type="evidence" value="ECO:0007669"/>
    <property type="project" value="UniProtKB-UniRule"/>
</dbReference>
<dbReference type="CDD" id="cd01288">
    <property type="entry name" value="FabZ"/>
    <property type="match status" value="1"/>
</dbReference>
<dbReference type="FunFam" id="3.10.129.10:FF:000001">
    <property type="entry name" value="3-hydroxyacyl-[acyl-carrier-protein] dehydratase FabZ"/>
    <property type="match status" value="1"/>
</dbReference>
<dbReference type="Gene3D" id="3.10.129.10">
    <property type="entry name" value="Hotdog Thioesterase"/>
    <property type="match status" value="1"/>
</dbReference>
<dbReference type="HAMAP" id="MF_00406">
    <property type="entry name" value="FabZ"/>
    <property type="match status" value="1"/>
</dbReference>
<dbReference type="InterPro" id="IPR013114">
    <property type="entry name" value="FabA_FabZ"/>
</dbReference>
<dbReference type="InterPro" id="IPR010084">
    <property type="entry name" value="FabZ"/>
</dbReference>
<dbReference type="InterPro" id="IPR029069">
    <property type="entry name" value="HotDog_dom_sf"/>
</dbReference>
<dbReference type="NCBIfam" id="TIGR01750">
    <property type="entry name" value="fabZ"/>
    <property type="match status" value="1"/>
</dbReference>
<dbReference type="NCBIfam" id="NF000582">
    <property type="entry name" value="PRK00006.1"/>
    <property type="match status" value="1"/>
</dbReference>
<dbReference type="PANTHER" id="PTHR30272">
    <property type="entry name" value="3-HYDROXYACYL-[ACYL-CARRIER-PROTEIN] DEHYDRATASE"/>
    <property type="match status" value="1"/>
</dbReference>
<dbReference type="PANTHER" id="PTHR30272:SF1">
    <property type="entry name" value="3-HYDROXYACYL-[ACYL-CARRIER-PROTEIN] DEHYDRATASE"/>
    <property type="match status" value="1"/>
</dbReference>
<dbReference type="Pfam" id="PF07977">
    <property type="entry name" value="FabA"/>
    <property type="match status" value="1"/>
</dbReference>
<dbReference type="SUPFAM" id="SSF54637">
    <property type="entry name" value="Thioesterase/thiol ester dehydrase-isomerase"/>
    <property type="match status" value="1"/>
</dbReference>
<organism>
    <name type="scientific">Methylobacterium radiotolerans (strain ATCC 27329 / DSM 1819 / JCM 2831 / NBRC 15690 / NCIMB 10815 / 0-1)</name>
    <dbReference type="NCBI Taxonomy" id="426355"/>
    <lineage>
        <taxon>Bacteria</taxon>
        <taxon>Pseudomonadati</taxon>
        <taxon>Pseudomonadota</taxon>
        <taxon>Alphaproteobacteria</taxon>
        <taxon>Hyphomicrobiales</taxon>
        <taxon>Methylobacteriaceae</taxon>
        <taxon>Methylobacterium</taxon>
    </lineage>
</organism>
<gene>
    <name evidence="1" type="primary">fabZ</name>
    <name type="ordered locus">Mrad2831_3437</name>
</gene>
<reference key="1">
    <citation type="submission" date="2008-03" db="EMBL/GenBank/DDBJ databases">
        <title>Complete sequence of chromosome of Methylobacterium radiotolerans JCM 2831.</title>
        <authorList>
            <consortium name="US DOE Joint Genome Institute"/>
            <person name="Copeland A."/>
            <person name="Lucas S."/>
            <person name="Lapidus A."/>
            <person name="Glavina del Rio T."/>
            <person name="Dalin E."/>
            <person name="Tice H."/>
            <person name="Bruce D."/>
            <person name="Goodwin L."/>
            <person name="Pitluck S."/>
            <person name="Kiss H."/>
            <person name="Brettin T."/>
            <person name="Detter J.C."/>
            <person name="Han C."/>
            <person name="Kuske C.R."/>
            <person name="Schmutz J."/>
            <person name="Larimer F."/>
            <person name="Land M."/>
            <person name="Hauser L."/>
            <person name="Kyrpides N."/>
            <person name="Mikhailova N."/>
            <person name="Marx C.J."/>
            <person name="Richardson P."/>
        </authorList>
    </citation>
    <scope>NUCLEOTIDE SEQUENCE [LARGE SCALE GENOMIC DNA]</scope>
    <source>
        <strain>ATCC 27329 / DSM 1819 / JCM 2831 / NBRC 15690 / NCIMB 10815 / 0-1</strain>
    </source>
</reference>
<name>FABZ_METRJ</name>
<feature type="chain" id="PRO_0000340787" description="3-hydroxyacyl-[acyl-carrier-protein] dehydratase FabZ">
    <location>
        <begin position="1"/>
        <end position="158"/>
    </location>
</feature>
<feature type="active site" evidence="1">
    <location>
        <position position="61"/>
    </location>
</feature>
<keyword id="KW-0963">Cytoplasm</keyword>
<keyword id="KW-0441">Lipid A biosynthesis</keyword>
<keyword id="KW-0444">Lipid biosynthesis</keyword>
<keyword id="KW-0443">Lipid metabolism</keyword>
<keyword id="KW-0456">Lyase</keyword>
<accession>B1LTP5</accession>